<accession>B6QSZ4</accession>
<comment type="function">
    <text evidence="1">Catalyzes the radical-mediated insertion of two sulfur atoms into the C-6 and C-8 positions of the octanoyl moiety bound to the lipoyl domains of lipoate-dependent enzymes, thereby converting the octanoylated domains into lipoylated derivatives.</text>
</comment>
<comment type="catalytic activity">
    <reaction evidence="1">
        <text>[[Fe-S] cluster scaffold protein carrying a second [4Fe-4S](2+) cluster] + N(6)-octanoyl-L-lysyl-[protein] + 2 oxidized [2Fe-2S]-[ferredoxin] + 2 S-adenosyl-L-methionine + 4 H(+) = [[Fe-S] cluster scaffold protein] + N(6)-[(R)-dihydrolipoyl]-L-lysyl-[protein] + 4 Fe(3+) + 2 hydrogen sulfide + 2 5'-deoxyadenosine + 2 L-methionine + 2 reduced [2Fe-2S]-[ferredoxin]</text>
        <dbReference type="Rhea" id="RHEA:16585"/>
        <dbReference type="Rhea" id="RHEA-COMP:9928"/>
        <dbReference type="Rhea" id="RHEA-COMP:10000"/>
        <dbReference type="Rhea" id="RHEA-COMP:10001"/>
        <dbReference type="Rhea" id="RHEA-COMP:10475"/>
        <dbReference type="Rhea" id="RHEA-COMP:14568"/>
        <dbReference type="Rhea" id="RHEA-COMP:14569"/>
        <dbReference type="ChEBI" id="CHEBI:15378"/>
        <dbReference type="ChEBI" id="CHEBI:17319"/>
        <dbReference type="ChEBI" id="CHEBI:29034"/>
        <dbReference type="ChEBI" id="CHEBI:29919"/>
        <dbReference type="ChEBI" id="CHEBI:33722"/>
        <dbReference type="ChEBI" id="CHEBI:33737"/>
        <dbReference type="ChEBI" id="CHEBI:33738"/>
        <dbReference type="ChEBI" id="CHEBI:57844"/>
        <dbReference type="ChEBI" id="CHEBI:59789"/>
        <dbReference type="ChEBI" id="CHEBI:78809"/>
        <dbReference type="ChEBI" id="CHEBI:83100"/>
        <dbReference type="EC" id="2.8.1.8"/>
    </reaction>
</comment>
<comment type="cofactor">
    <cofactor evidence="1">
        <name>[4Fe-4S] cluster</name>
        <dbReference type="ChEBI" id="CHEBI:49883"/>
    </cofactor>
    <text evidence="1">Binds 2 [4Fe-4S] clusters per subunit. One cluster is coordinated with 3 cysteines and an exchangeable S-adenosyl-L-methionine.</text>
</comment>
<comment type="pathway">
    <text evidence="1">Protein modification; protein lipoylation via endogenous pathway; protein N(6)-(lipoyl)lysine from octanoyl-[acyl-carrier-protein]: step 2/2.</text>
</comment>
<comment type="subcellular location">
    <subcellularLocation>
        <location evidence="1">Mitochondrion</location>
    </subcellularLocation>
</comment>
<comment type="similarity">
    <text evidence="1">Belongs to the radical SAM superfamily. Lipoyl synthase family.</text>
</comment>
<gene>
    <name type="ORF">PMAA_003450</name>
</gene>
<keyword id="KW-0004">4Fe-4S</keyword>
<keyword id="KW-0408">Iron</keyword>
<keyword id="KW-0411">Iron-sulfur</keyword>
<keyword id="KW-0479">Metal-binding</keyword>
<keyword id="KW-0496">Mitochondrion</keyword>
<keyword id="KW-1185">Reference proteome</keyword>
<keyword id="KW-0949">S-adenosyl-L-methionine</keyword>
<keyword id="KW-0808">Transferase</keyword>
<keyword id="KW-0809">Transit peptide</keyword>
<evidence type="ECO:0000255" key="1">
    <source>
        <dbReference type="HAMAP-Rule" id="MF_03123"/>
    </source>
</evidence>
<evidence type="ECO:0000255" key="2">
    <source>
        <dbReference type="PROSITE-ProRule" id="PRU01266"/>
    </source>
</evidence>
<evidence type="ECO:0000256" key="3">
    <source>
        <dbReference type="SAM" id="MobiDB-lite"/>
    </source>
</evidence>
<feature type="transit peptide" description="Mitochondrion" evidence="1">
    <location>
        <begin position="1"/>
        <end position="33"/>
    </location>
</feature>
<feature type="chain" id="PRO_0000398279" description="Lipoyl synthase, mitochondrial">
    <location>
        <begin position="34"/>
        <end position="425"/>
    </location>
</feature>
<feature type="domain" description="Radical SAM core" evidence="2">
    <location>
        <begin position="156"/>
        <end position="377"/>
    </location>
</feature>
<feature type="region of interest" description="Disordered" evidence="3">
    <location>
        <begin position="17"/>
        <end position="55"/>
    </location>
</feature>
<feature type="compositionally biased region" description="Polar residues" evidence="3">
    <location>
        <begin position="33"/>
        <end position="51"/>
    </location>
</feature>
<feature type="binding site" evidence="1">
    <location>
        <position position="142"/>
    </location>
    <ligand>
        <name>[4Fe-4S] cluster</name>
        <dbReference type="ChEBI" id="CHEBI:49883"/>
        <label>1</label>
    </ligand>
</feature>
<feature type="binding site" evidence="1">
    <location>
        <position position="147"/>
    </location>
    <ligand>
        <name>[4Fe-4S] cluster</name>
        <dbReference type="ChEBI" id="CHEBI:49883"/>
        <label>1</label>
    </ligand>
</feature>
<feature type="binding site" evidence="1">
    <location>
        <position position="153"/>
    </location>
    <ligand>
        <name>[4Fe-4S] cluster</name>
        <dbReference type="ChEBI" id="CHEBI:49883"/>
        <label>1</label>
    </ligand>
</feature>
<feature type="binding site" evidence="1">
    <location>
        <position position="173"/>
    </location>
    <ligand>
        <name>[4Fe-4S] cluster</name>
        <dbReference type="ChEBI" id="CHEBI:49883"/>
        <label>2</label>
        <note>4Fe-4S-S-AdoMet</note>
    </ligand>
</feature>
<feature type="binding site" evidence="1">
    <location>
        <position position="177"/>
    </location>
    <ligand>
        <name>[4Fe-4S] cluster</name>
        <dbReference type="ChEBI" id="CHEBI:49883"/>
        <label>2</label>
        <note>4Fe-4S-S-AdoMet</note>
    </ligand>
</feature>
<feature type="binding site" evidence="1">
    <location>
        <position position="180"/>
    </location>
    <ligand>
        <name>[4Fe-4S] cluster</name>
        <dbReference type="ChEBI" id="CHEBI:49883"/>
        <label>2</label>
        <note>4Fe-4S-S-AdoMet</note>
    </ligand>
</feature>
<feature type="binding site" evidence="1">
    <location>
        <position position="388"/>
    </location>
    <ligand>
        <name>[4Fe-4S] cluster</name>
        <dbReference type="ChEBI" id="CHEBI:49883"/>
        <label>1</label>
    </ligand>
</feature>
<sequence length="425" mass="46515">MAASSTRLRCLYASSSTWKTSPSQSLISLSRRYATTSSAPPTPSDESSSTLPKRRKTTTFKDKLNAGPSFADFVSGNGDSNNAPLDASEAYALETVMIPGPAGRGKKEHTRLPSWLKTPIPDSTNYKRIKKDLRGLKLNTVCEEARCPNISDCWGGSDKSAATATIMLMGDSCTRGCRFCSVKTLRTPGPLDPHEPENTAEALSRWGLGYVVLTSVDRDDLSDGGAHHFAETVIKIKQKAPGILVECLTGDFAGDFDMVALVAKSGLDVYAHNVETVEALTPHVRDRRATFQQSLRVLEAAKRAKPSLITKTSMMLGFGETEDQMWDALRQLRASNVDVVTFGQYMRPTKRHMAVHEYVTPDKFELWRQRALEMGFLYVASGPLVRSSYKAGEAFIENVLKKRRGVGNTPGAEVTTEVPVDALAK</sequence>
<organism>
    <name type="scientific">Talaromyces marneffei (strain ATCC 18224 / CBS 334.59 / QM 7333)</name>
    <name type="common">Penicillium marneffei</name>
    <dbReference type="NCBI Taxonomy" id="441960"/>
    <lineage>
        <taxon>Eukaryota</taxon>
        <taxon>Fungi</taxon>
        <taxon>Dikarya</taxon>
        <taxon>Ascomycota</taxon>
        <taxon>Pezizomycotina</taxon>
        <taxon>Eurotiomycetes</taxon>
        <taxon>Eurotiomycetidae</taxon>
        <taxon>Eurotiales</taxon>
        <taxon>Trichocomaceae</taxon>
        <taxon>Talaromyces</taxon>
        <taxon>Talaromyces sect. Talaromyces</taxon>
    </lineage>
</organism>
<protein>
    <recommendedName>
        <fullName evidence="1">Lipoyl synthase, mitochondrial</fullName>
        <ecNumber evidence="1">2.8.1.8</ecNumber>
    </recommendedName>
    <alternativeName>
        <fullName evidence="1">Lipoate synthase</fullName>
        <shortName evidence="1">LS</shortName>
        <shortName evidence="1">Lip-syn</shortName>
    </alternativeName>
    <alternativeName>
        <fullName evidence="1">Lipoic acid synthase</fullName>
    </alternativeName>
</protein>
<name>LIPA_TALMQ</name>
<dbReference type="EC" id="2.8.1.8" evidence="1"/>
<dbReference type="EMBL" id="DS995905">
    <property type="protein sequence ID" value="EEA19557.1"/>
    <property type="molecule type" value="Genomic_DNA"/>
</dbReference>
<dbReference type="RefSeq" id="XP_002152494.1">
    <property type="nucleotide sequence ID" value="XM_002152458.1"/>
</dbReference>
<dbReference type="SMR" id="B6QSZ4"/>
<dbReference type="STRING" id="441960.B6QSZ4"/>
<dbReference type="VEuPathDB" id="FungiDB:PMAA_003450"/>
<dbReference type="HOGENOM" id="CLU_033144_0_0_1"/>
<dbReference type="OrthoDB" id="3250at28568"/>
<dbReference type="PhylomeDB" id="B6QSZ4"/>
<dbReference type="UniPathway" id="UPA00538">
    <property type="reaction ID" value="UER00593"/>
</dbReference>
<dbReference type="Proteomes" id="UP000001294">
    <property type="component" value="Unassembled WGS sequence"/>
</dbReference>
<dbReference type="GO" id="GO:0005739">
    <property type="term" value="C:mitochondrion"/>
    <property type="evidence" value="ECO:0007669"/>
    <property type="project" value="UniProtKB-SubCell"/>
</dbReference>
<dbReference type="GO" id="GO:0051539">
    <property type="term" value="F:4 iron, 4 sulfur cluster binding"/>
    <property type="evidence" value="ECO:0007669"/>
    <property type="project" value="UniProtKB-UniRule"/>
</dbReference>
<dbReference type="GO" id="GO:0016992">
    <property type="term" value="F:lipoate synthase activity"/>
    <property type="evidence" value="ECO:0007669"/>
    <property type="project" value="UniProtKB-UniRule"/>
</dbReference>
<dbReference type="GO" id="GO:0046872">
    <property type="term" value="F:metal ion binding"/>
    <property type="evidence" value="ECO:0007669"/>
    <property type="project" value="UniProtKB-KW"/>
</dbReference>
<dbReference type="CDD" id="cd01335">
    <property type="entry name" value="Radical_SAM"/>
    <property type="match status" value="1"/>
</dbReference>
<dbReference type="FunFam" id="3.20.20.70:FF:000036">
    <property type="entry name" value="Lipoyl synthase, mitochondrial"/>
    <property type="match status" value="1"/>
</dbReference>
<dbReference type="Gene3D" id="3.20.20.70">
    <property type="entry name" value="Aldolase class I"/>
    <property type="match status" value="1"/>
</dbReference>
<dbReference type="HAMAP" id="MF_00206">
    <property type="entry name" value="Lipoyl_synth"/>
    <property type="match status" value="1"/>
</dbReference>
<dbReference type="InterPro" id="IPR013785">
    <property type="entry name" value="Aldolase_TIM"/>
</dbReference>
<dbReference type="InterPro" id="IPR006638">
    <property type="entry name" value="Elp3/MiaA/NifB-like_rSAM"/>
</dbReference>
<dbReference type="InterPro" id="IPR031691">
    <property type="entry name" value="LIAS_N"/>
</dbReference>
<dbReference type="InterPro" id="IPR003698">
    <property type="entry name" value="Lipoyl_synth"/>
</dbReference>
<dbReference type="InterPro" id="IPR007197">
    <property type="entry name" value="rSAM"/>
</dbReference>
<dbReference type="NCBIfam" id="TIGR00510">
    <property type="entry name" value="lipA"/>
    <property type="match status" value="1"/>
</dbReference>
<dbReference type="NCBIfam" id="NF004019">
    <property type="entry name" value="PRK05481.1"/>
    <property type="match status" value="1"/>
</dbReference>
<dbReference type="NCBIfam" id="NF009544">
    <property type="entry name" value="PRK12928.1"/>
    <property type="match status" value="1"/>
</dbReference>
<dbReference type="PANTHER" id="PTHR10949">
    <property type="entry name" value="LIPOYL SYNTHASE"/>
    <property type="match status" value="1"/>
</dbReference>
<dbReference type="PANTHER" id="PTHR10949:SF0">
    <property type="entry name" value="LIPOYL SYNTHASE, MITOCHONDRIAL"/>
    <property type="match status" value="1"/>
</dbReference>
<dbReference type="Pfam" id="PF16881">
    <property type="entry name" value="LIAS_N"/>
    <property type="match status" value="1"/>
</dbReference>
<dbReference type="Pfam" id="PF04055">
    <property type="entry name" value="Radical_SAM"/>
    <property type="match status" value="1"/>
</dbReference>
<dbReference type="SFLD" id="SFLDF00271">
    <property type="entry name" value="lipoyl_synthase"/>
    <property type="match status" value="1"/>
</dbReference>
<dbReference type="SFLD" id="SFLDG01058">
    <property type="entry name" value="lipoyl_synthase_like"/>
    <property type="match status" value="1"/>
</dbReference>
<dbReference type="SMART" id="SM00729">
    <property type="entry name" value="Elp3"/>
    <property type="match status" value="1"/>
</dbReference>
<dbReference type="SUPFAM" id="SSF102114">
    <property type="entry name" value="Radical SAM enzymes"/>
    <property type="match status" value="1"/>
</dbReference>
<dbReference type="PROSITE" id="PS51918">
    <property type="entry name" value="RADICAL_SAM"/>
    <property type="match status" value="1"/>
</dbReference>
<proteinExistence type="inferred from homology"/>
<reference key="1">
    <citation type="journal article" date="2015" name="Genome Announc.">
        <title>Genome sequence of the AIDS-associated pathogen Penicillium marneffei (ATCC18224) and its near taxonomic relative Talaromyces stipitatus (ATCC10500).</title>
        <authorList>
            <person name="Nierman W.C."/>
            <person name="Fedorova-Abrams N.D."/>
            <person name="Andrianopoulos A."/>
        </authorList>
    </citation>
    <scope>NUCLEOTIDE SEQUENCE [LARGE SCALE GENOMIC DNA]</scope>
    <source>
        <strain>ATCC 18224 / CBS 334.59 / QM 7333</strain>
    </source>
</reference>